<sequence>MAKYAAAIDQGTTSTRCMIFDHSGNVICYDQKEHEQIYPRPGWVEHSPDEIWERTQSVIRGALSKGGLSASDIVAVGITNQRETTVVWNRKTGRPVYNAIVWQDTRTDQICNELAADGGQDRFRAKVGLPLATYFSGPKIRWILDNVPDAREAAEAGDVVFGNIDTFLTWWLTGGPNGGVHVTDVTNASRTMLMNLETLDWDDEILSVMGIPRQMLPKIVPSSMVYGTAVGELAGVPVAGILGDQQAAMVGQTCFDVGEAKNTYGTGSFMLLNTGTKIVPSKSGLLTTVCYKFGDQPAVYALEGSIAITGALVQWLRDNLGLITTSAEVEALANLVEDNGGIYFVPAFSGLFAPYWRSDARGVIVGLTRYVNKGHLARAVLEATAYQTREVLDAMEQDSGVKLTALKVDGGMVYNNTLMQFQADILGVPVIRPKVAETTSLGAAYAAGLAVGFWSNTDEMRANWGVDHTWTPQMDEATRERLYRGWKKAVTRTFDWVE</sequence>
<comment type="function">
    <text evidence="1">Key enzyme in the regulation of glycerol uptake and metabolism. Catalyzes the phosphorylation of glycerol to yield sn-glycerol 3-phosphate.</text>
</comment>
<comment type="catalytic activity">
    <reaction evidence="1">
        <text>glycerol + ATP = sn-glycerol 3-phosphate + ADP + H(+)</text>
        <dbReference type="Rhea" id="RHEA:21644"/>
        <dbReference type="ChEBI" id="CHEBI:15378"/>
        <dbReference type="ChEBI" id="CHEBI:17754"/>
        <dbReference type="ChEBI" id="CHEBI:30616"/>
        <dbReference type="ChEBI" id="CHEBI:57597"/>
        <dbReference type="ChEBI" id="CHEBI:456216"/>
        <dbReference type="EC" id="2.7.1.30"/>
    </reaction>
</comment>
<comment type="activity regulation">
    <text evidence="1">Inhibited by fructose 1,6-bisphosphate (FBP).</text>
</comment>
<comment type="pathway">
    <text evidence="1">Polyol metabolism; glycerol degradation via glycerol kinase pathway; sn-glycerol 3-phosphate from glycerol: step 1/1.</text>
</comment>
<comment type="similarity">
    <text evidence="1">Belongs to the FGGY kinase family.</text>
</comment>
<reference key="1">
    <citation type="submission" date="2008-12" db="EMBL/GenBank/DDBJ databases">
        <title>Complete sequence of Chloroflexus aggregans DSM 9485.</title>
        <authorList>
            <consortium name="US DOE Joint Genome Institute"/>
            <person name="Lucas S."/>
            <person name="Copeland A."/>
            <person name="Lapidus A."/>
            <person name="Glavina del Rio T."/>
            <person name="Dalin E."/>
            <person name="Tice H."/>
            <person name="Pitluck S."/>
            <person name="Foster B."/>
            <person name="Larimer F."/>
            <person name="Land M."/>
            <person name="Hauser L."/>
            <person name="Kyrpides N."/>
            <person name="Mikhailova N."/>
            <person name="Bryant D.A."/>
            <person name="Richardson P."/>
        </authorList>
    </citation>
    <scope>NUCLEOTIDE SEQUENCE [LARGE SCALE GENOMIC DNA]</scope>
    <source>
        <strain>MD-66 / DSM 9485</strain>
    </source>
</reference>
<keyword id="KW-0067">ATP-binding</keyword>
<keyword id="KW-0319">Glycerol metabolism</keyword>
<keyword id="KW-0418">Kinase</keyword>
<keyword id="KW-0547">Nucleotide-binding</keyword>
<keyword id="KW-0808">Transferase</keyword>
<feature type="chain" id="PRO_1000124185" description="Glycerol kinase">
    <location>
        <begin position="1"/>
        <end position="498"/>
    </location>
</feature>
<feature type="binding site" evidence="1">
    <location>
        <position position="12"/>
    </location>
    <ligand>
        <name>ADP</name>
        <dbReference type="ChEBI" id="CHEBI:456216"/>
    </ligand>
</feature>
<feature type="binding site" evidence="1">
    <location>
        <position position="12"/>
    </location>
    <ligand>
        <name>ATP</name>
        <dbReference type="ChEBI" id="CHEBI:30616"/>
    </ligand>
</feature>
<feature type="binding site" evidence="1">
    <location>
        <position position="12"/>
    </location>
    <ligand>
        <name>sn-glycerol 3-phosphate</name>
        <dbReference type="ChEBI" id="CHEBI:57597"/>
    </ligand>
</feature>
<feature type="binding site" evidence="1">
    <location>
        <position position="13"/>
    </location>
    <ligand>
        <name>ATP</name>
        <dbReference type="ChEBI" id="CHEBI:30616"/>
    </ligand>
</feature>
<feature type="binding site" evidence="1">
    <location>
        <position position="14"/>
    </location>
    <ligand>
        <name>ATP</name>
        <dbReference type="ChEBI" id="CHEBI:30616"/>
    </ligand>
</feature>
<feature type="binding site" evidence="1">
    <location>
        <position position="16"/>
    </location>
    <ligand>
        <name>ADP</name>
        <dbReference type="ChEBI" id="CHEBI:456216"/>
    </ligand>
</feature>
<feature type="binding site" evidence="1">
    <location>
        <position position="82"/>
    </location>
    <ligand>
        <name>glycerol</name>
        <dbReference type="ChEBI" id="CHEBI:17754"/>
    </ligand>
</feature>
<feature type="binding site" evidence="1">
    <location>
        <position position="82"/>
    </location>
    <ligand>
        <name>sn-glycerol 3-phosphate</name>
        <dbReference type="ChEBI" id="CHEBI:57597"/>
    </ligand>
</feature>
<feature type="binding site" evidence="1">
    <location>
        <position position="83"/>
    </location>
    <ligand>
        <name>glycerol</name>
        <dbReference type="ChEBI" id="CHEBI:17754"/>
    </ligand>
</feature>
<feature type="binding site" evidence="1">
    <location>
        <position position="83"/>
    </location>
    <ligand>
        <name>sn-glycerol 3-phosphate</name>
        <dbReference type="ChEBI" id="CHEBI:57597"/>
    </ligand>
</feature>
<feature type="binding site" evidence="1">
    <location>
        <position position="134"/>
    </location>
    <ligand>
        <name>glycerol</name>
        <dbReference type="ChEBI" id="CHEBI:17754"/>
    </ligand>
</feature>
<feature type="binding site" evidence="1">
    <location>
        <position position="134"/>
    </location>
    <ligand>
        <name>sn-glycerol 3-phosphate</name>
        <dbReference type="ChEBI" id="CHEBI:57597"/>
    </ligand>
</feature>
<feature type="binding site" evidence="1">
    <location>
        <position position="244"/>
    </location>
    <ligand>
        <name>glycerol</name>
        <dbReference type="ChEBI" id="CHEBI:17754"/>
    </ligand>
</feature>
<feature type="binding site" evidence="1">
    <location>
        <position position="244"/>
    </location>
    <ligand>
        <name>sn-glycerol 3-phosphate</name>
        <dbReference type="ChEBI" id="CHEBI:57597"/>
    </ligand>
</feature>
<feature type="binding site" evidence="1">
    <location>
        <position position="245"/>
    </location>
    <ligand>
        <name>glycerol</name>
        <dbReference type="ChEBI" id="CHEBI:17754"/>
    </ligand>
</feature>
<feature type="binding site" evidence="1">
    <location>
        <position position="266"/>
    </location>
    <ligand>
        <name>ADP</name>
        <dbReference type="ChEBI" id="CHEBI:456216"/>
    </ligand>
</feature>
<feature type="binding site" evidence="1">
    <location>
        <position position="266"/>
    </location>
    <ligand>
        <name>ATP</name>
        <dbReference type="ChEBI" id="CHEBI:30616"/>
    </ligand>
</feature>
<feature type="binding site" evidence="1">
    <location>
        <position position="310"/>
    </location>
    <ligand>
        <name>ADP</name>
        <dbReference type="ChEBI" id="CHEBI:456216"/>
    </ligand>
</feature>
<feature type="binding site" evidence="1">
    <location>
        <position position="310"/>
    </location>
    <ligand>
        <name>ATP</name>
        <dbReference type="ChEBI" id="CHEBI:30616"/>
    </ligand>
</feature>
<feature type="binding site" evidence="1">
    <location>
        <position position="314"/>
    </location>
    <ligand>
        <name>ATP</name>
        <dbReference type="ChEBI" id="CHEBI:30616"/>
    </ligand>
</feature>
<feature type="binding site" evidence="1">
    <location>
        <position position="411"/>
    </location>
    <ligand>
        <name>ADP</name>
        <dbReference type="ChEBI" id="CHEBI:456216"/>
    </ligand>
</feature>
<feature type="binding site" evidence="1">
    <location>
        <position position="411"/>
    </location>
    <ligand>
        <name>ATP</name>
        <dbReference type="ChEBI" id="CHEBI:30616"/>
    </ligand>
</feature>
<feature type="binding site" evidence="1">
    <location>
        <position position="415"/>
    </location>
    <ligand>
        <name>ADP</name>
        <dbReference type="ChEBI" id="CHEBI:456216"/>
    </ligand>
</feature>
<accession>B8GC51</accession>
<name>GLPK_CHLAD</name>
<proteinExistence type="inferred from homology"/>
<gene>
    <name evidence="1" type="primary">glpK</name>
    <name type="ordered locus">Cagg_0072</name>
</gene>
<protein>
    <recommendedName>
        <fullName evidence="1">Glycerol kinase</fullName>
        <ecNumber evidence="1">2.7.1.30</ecNumber>
    </recommendedName>
    <alternativeName>
        <fullName evidence="1">ATP:glycerol 3-phosphotransferase</fullName>
    </alternativeName>
    <alternativeName>
        <fullName evidence="1">Glycerokinase</fullName>
        <shortName evidence="1">GK</shortName>
    </alternativeName>
</protein>
<evidence type="ECO:0000255" key="1">
    <source>
        <dbReference type="HAMAP-Rule" id="MF_00186"/>
    </source>
</evidence>
<dbReference type="EC" id="2.7.1.30" evidence="1"/>
<dbReference type="EMBL" id="CP001337">
    <property type="protein sequence ID" value="ACL23025.1"/>
    <property type="molecule type" value="Genomic_DNA"/>
</dbReference>
<dbReference type="RefSeq" id="WP_012615391.1">
    <property type="nucleotide sequence ID" value="NC_011831.1"/>
</dbReference>
<dbReference type="SMR" id="B8GC51"/>
<dbReference type="STRING" id="326427.Cagg_0072"/>
<dbReference type="KEGG" id="cag:Cagg_0072"/>
<dbReference type="eggNOG" id="COG0554">
    <property type="taxonomic scope" value="Bacteria"/>
</dbReference>
<dbReference type="HOGENOM" id="CLU_009281_2_3_0"/>
<dbReference type="OrthoDB" id="9805576at2"/>
<dbReference type="UniPathway" id="UPA00618">
    <property type="reaction ID" value="UER00672"/>
</dbReference>
<dbReference type="Proteomes" id="UP000002508">
    <property type="component" value="Chromosome"/>
</dbReference>
<dbReference type="GO" id="GO:0005829">
    <property type="term" value="C:cytosol"/>
    <property type="evidence" value="ECO:0007669"/>
    <property type="project" value="TreeGrafter"/>
</dbReference>
<dbReference type="GO" id="GO:0005524">
    <property type="term" value="F:ATP binding"/>
    <property type="evidence" value="ECO:0007669"/>
    <property type="project" value="UniProtKB-UniRule"/>
</dbReference>
<dbReference type="GO" id="GO:0004370">
    <property type="term" value="F:glycerol kinase activity"/>
    <property type="evidence" value="ECO:0000250"/>
    <property type="project" value="UniProtKB"/>
</dbReference>
<dbReference type="GO" id="GO:0019563">
    <property type="term" value="P:glycerol catabolic process"/>
    <property type="evidence" value="ECO:0007669"/>
    <property type="project" value="UniProtKB-UniRule"/>
</dbReference>
<dbReference type="GO" id="GO:0006071">
    <property type="term" value="P:glycerol metabolic process"/>
    <property type="evidence" value="ECO:0000250"/>
    <property type="project" value="UniProtKB"/>
</dbReference>
<dbReference type="GO" id="GO:0006072">
    <property type="term" value="P:glycerol-3-phosphate metabolic process"/>
    <property type="evidence" value="ECO:0007669"/>
    <property type="project" value="InterPro"/>
</dbReference>
<dbReference type="CDD" id="cd07769">
    <property type="entry name" value="ASKHA_NBD_FGGY_GK"/>
    <property type="match status" value="1"/>
</dbReference>
<dbReference type="FunFam" id="3.30.420.40:FF:000007">
    <property type="entry name" value="Glycerol kinase"/>
    <property type="match status" value="1"/>
</dbReference>
<dbReference type="FunFam" id="3.30.420.40:FF:000008">
    <property type="entry name" value="Glycerol kinase"/>
    <property type="match status" value="1"/>
</dbReference>
<dbReference type="Gene3D" id="3.30.420.40">
    <property type="match status" value="2"/>
</dbReference>
<dbReference type="HAMAP" id="MF_00186">
    <property type="entry name" value="Glycerol_kin"/>
    <property type="match status" value="1"/>
</dbReference>
<dbReference type="InterPro" id="IPR043129">
    <property type="entry name" value="ATPase_NBD"/>
</dbReference>
<dbReference type="InterPro" id="IPR000577">
    <property type="entry name" value="Carb_kinase_FGGY"/>
</dbReference>
<dbReference type="InterPro" id="IPR018483">
    <property type="entry name" value="Carb_kinase_FGGY_CS"/>
</dbReference>
<dbReference type="InterPro" id="IPR018485">
    <property type="entry name" value="FGGY_C"/>
</dbReference>
<dbReference type="InterPro" id="IPR018484">
    <property type="entry name" value="FGGY_N"/>
</dbReference>
<dbReference type="InterPro" id="IPR005999">
    <property type="entry name" value="Glycerol_kin"/>
</dbReference>
<dbReference type="NCBIfam" id="TIGR01311">
    <property type="entry name" value="glycerol_kin"/>
    <property type="match status" value="1"/>
</dbReference>
<dbReference type="NCBIfam" id="NF000756">
    <property type="entry name" value="PRK00047.1"/>
    <property type="match status" value="1"/>
</dbReference>
<dbReference type="PANTHER" id="PTHR10196:SF69">
    <property type="entry name" value="GLYCEROL KINASE"/>
    <property type="match status" value="1"/>
</dbReference>
<dbReference type="PANTHER" id="PTHR10196">
    <property type="entry name" value="SUGAR KINASE"/>
    <property type="match status" value="1"/>
</dbReference>
<dbReference type="Pfam" id="PF02782">
    <property type="entry name" value="FGGY_C"/>
    <property type="match status" value="1"/>
</dbReference>
<dbReference type="Pfam" id="PF00370">
    <property type="entry name" value="FGGY_N"/>
    <property type="match status" value="1"/>
</dbReference>
<dbReference type="PIRSF" id="PIRSF000538">
    <property type="entry name" value="GlpK"/>
    <property type="match status" value="1"/>
</dbReference>
<dbReference type="SUPFAM" id="SSF53067">
    <property type="entry name" value="Actin-like ATPase domain"/>
    <property type="match status" value="2"/>
</dbReference>
<dbReference type="PROSITE" id="PS00933">
    <property type="entry name" value="FGGY_KINASES_1"/>
    <property type="match status" value="1"/>
</dbReference>
<dbReference type="PROSITE" id="PS00445">
    <property type="entry name" value="FGGY_KINASES_2"/>
    <property type="match status" value="1"/>
</dbReference>
<organism>
    <name type="scientific">Chloroflexus aggregans (strain MD-66 / DSM 9485)</name>
    <dbReference type="NCBI Taxonomy" id="326427"/>
    <lineage>
        <taxon>Bacteria</taxon>
        <taxon>Bacillati</taxon>
        <taxon>Chloroflexota</taxon>
        <taxon>Chloroflexia</taxon>
        <taxon>Chloroflexales</taxon>
        <taxon>Chloroflexineae</taxon>
        <taxon>Chloroflexaceae</taxon>
        <taxon>Chloroflexus</taxon>
    </lineage>
</organism>